<accession>P20912</accession>
<accession>A0A1L8FLC9</accession>
<organism>
    <name type="scientific">Xenopus laevis</name>
    <name type="common">African clawed frog</name>
    <dbReference type="NCBI Taxonomy" id="8355"/>
    <lineage>
        <taxon>Eukaryota</taxon>
        <taxon>Metazoa</taxon>
        <taxon>Chordata</taxon>
        <taxon>Craniata</taxon>
        <taxon>Vertebrata</taxon>
        <taxon>Euteleostomi</taxon>
        <taxon>Amphibia</taxon>
        <taxon>Batrachia</taxon>
        <taxon>Anura</taxon>
        <taxon>Pipoidea</taxon>
        <taxon>Pipidae</taxon>
        <taxon>Xenopodinae</taxon>
        <taxon>Xenopus</taxon>
        <taxon>Xenopus</taxon>
    </lineage>
</organism>
<proteinExistence type="evidence at transcript level"/>
<feature type="chain" id="PRO_0000100766" description="POU domain, class 2, transcription factor 3L">
    <location>
        <begin position="1"/>
        <end position="404"/>
    </location>
</feature>
<feature type="domain" description="POU-specific" evidence="4">
    <location>
        <begin position="187"/>
        <end position="235"/>
    </location>
</feature>
<feature type="DNA-binding region" description="Homeobox" evidence="3">
    <location>
        <begin position="259"/>
        <end position="297"/>
    </location>
</feature>
<feature type="region of interest" description="Disordered" evidence="5">
    <location>
        <begin position="1"/>
        <end position="29"/>
    </location>
</feature>
<feature type="region of interest" description="Disordered" evidence="5">
    <location>
        <begin position="44"/>
        <end position="67"/>
    </location>
</feature>
<feature type="region of interest" description="Disordered" evidence="5">
    <location>
        <begin position="346"/>
        <end position="367"/>
    </location>
</feature>
<feature type="compositionally biased region" description="Basic and acidic residues" evidence="5">
    <location>
        <begin position="16"/>
        <end position="29"/>
    </location>
</feature>
<feature type="compositionally biased region" description="Low complexity" evidence="5">
    <location>
        <begin position="350"/>
        <end position="363"/>
    </location>
</feature>
<reference key="1">
    <citation type="journal article" date="1990" name="Nucleic Acids Res.">
        <title>Cloning and sequencing of POU-boxes expressed in Xenopus laevis neurula embryos.</title>
        <authorList>
            <person name="Baltzinger M."/>
            <person name="Stiegler P."/>
            <person name="Remy P."/>
        </authorList>
    </citation>
    <scope>NUCLEOTIDE SEQUENCE [MRNA]</scope>
    <source>
        <tissue>Neurula</tissue>
    </source>
</reference>
<reference key="2">
    <citation type="submission" date="2016-05" db="EMBL/GenBank/DDBJ databases">
        <title>WGS assembly of Xenopus laevis.</title>
        <authorList>
            <person name="Session A."/>
            <person name="Uno Y."/>
            <person name="Kwon T."/>
            <person name="Chapman J."/>
            <person name="Toyoda A."/>
            <person name="Takahashi S."/>
            <person name="Fukui A."/>
            <person name="Hikosaka A."/>
            <person name="Putnam N."/>
            <person name="Stites J."/>
            <person name="Van Heeringen S."/>
            <person name="Quigley I."/>
            <person name="Heinz S."/>
            <person name="Hellsten U."/>
            <person name="Lyons J."/>
            <person name="Suzuki A."/>
            <person name="Kondo M."/>
            <person name="Ogino H."/>
            <person name="Ochi H."/>
            <person name="Bogdanovic O."/>
            <person name="Lister R."/>
            <person name="Georgiou G."/>
            <person name="Paranjpe S."/>
            <person name="Van Kruijsbergen I."/>
            <person name="Mozaffari S."/>
            <person name="Shu S."/>
            <person name="Schmutz J."/>
            <person name="Jenkins J."/>
            <person name="Grimwood J."/>
            <person name="Carlson J."/>
            <person name="Mitros T."/>
            <person name="Simakov O."/>
            <person name="Heald R."/>
            <person name="Miller K."/>
            <person name="Haudenschild C."/>
            <person name="Kuroki Y."/>
            <person name="Tanaka T."/>
            <person name="Michiue T."/>
            <person name="Watanabe M."/>
            <person name="Kinoshita T."/>
            <person name="Ohta Y."/>
            <person name="Mawaribuchi S."/>
            <person name="Suzuki Y."/>
            <person name="Haramoto Y."/>
            <person name="Yamamoto T."/>
            <person name="Takagi C."/>
            <person name="Kitzman J."/>
            <person name="Shendure J."/>
            <person name="Nakayama T."/>
            <person name="Izutsu Y."/>
            <person name="Robert J."/>
            <person name="Dichmann D."/>
            <person name="Flajnik M."/>
            <person name="Houston D."/>
            <person name="Marcotte E."/>
            <person name="Wallingford J."/>
            <person name="Ito Y."/>
            <person name="Asashima M."/>
            <person name="Ueno N."/>
            <person name="Matsuda Y."/>
            <person name="Jan Veenstra G."/>
            <person name="Fujiyama A."/>
            <person name="Harland R."/>
            <person name="Taira M."/>
            <person name="Rokhsar D.S."/>
        </authorList>
    </citation>
    <scope>NUCLEOTIDE SEQUENCE [LARGE SCALE GENOMIC DNA]</scope>
    <source>
        <strain>J</strain>
        <tissue>Blood</tissue>
    </source>
</reference>
<evidence type="ECO:0000250" key="1">
    <source>
        <dbReference type="UniProtKB" id="P31362"/>
    </source>
</evidence>
<evidence type="ECO:0000250" key="2">
    <source>
        <dbReference type="UniProtKB" id="Q9UKI9"/>
    </source>
</evidence>
<evidence type="ECO:0000255" key="3">
    <source>
        <dbReference type="PROSITE-ProRule" id="PRU00108"/>
    </source>
</evidence>
<evidence type="ECO:0000255" key="4">
    <source>
        <dbReference type="PROSITE-ProRule" id="PRU00530"/>
    </source>
</evidence>
<evidence type="ECO:0000256" key="5">
    <source>
        <dbReference type="SAM" id="MobiDB-lite"/>
    </source>
</evidence>
<evidence type="ECO:0000305" key="6"/>
<name>P2F3L_XENLA</name>
<protein>
    <recommendedName>
        <fullName>POU domain, class 2, transcription factor 3L</fullName>
    </recommendedName>
    <alternativeName>
        <fullName>Homeotic protein NRL-16</fullName>
        <shortName>XlNRL-16</shortName>
    </alternativeName>
    <alternativeName>
        <fullName>Homeotic protein NRL-21</fullName>
        <shortName>XlNRL-21</shortName>
    </alternativeName>
</protein>
<keyword id="KW-0010">Activator</keyword>
<keyword id="KW-0238">DNA-binding</keyword>
<keyword id="KW-0371">Homeobox</keyword>
<keyword id="KW-0539">Nucleus</keyword>
<keyword id="KW-1185">Reference proteome</keyword>
<keyword id="KW-0804">Transcription</keyword>
<keyword id="KW-0805">Transcription regulation</keyword>
<gene>
    <name type="primary">pou2f3.L</name>
    <name type="synonym">nrl-16</name>
    <name type="synonym">nrl-21</name>
</gene>
<dbReference type="EMBL" id="X54678">
    <property type="protein sequence ID" value="CAA38492.1"/>
    <property type="molecule type" value="mRNA"/>
</dbReference>
<dbReference type="EMBL" id="CM004478">
    <property type="protein sequence ID" value="OCT72398.1"/>
    <property type="molecule type" value="Genomic_DNA"/>
</dbReference>
<dbReference type="PIR" id="S12179">
    <property type="entry name" value="S12179"/>
</dbReference>
<dbReference type="RefSeq" id="XP_018081262.1">
    <property type="nucleotide sequence ID" value="XM_018225773.2"/>
</dbReference>
<dbReference type="SMR" id="P20912"/>
<dbReference type="STRING" id="8355.A0A1L8FLC9"/>
<dbReference type="PaxDb" id="8355-A0A1L8FLC9"/>
<dbReference type="GeneID" id="373771"/>
<dbReference type="KEGG" id="xla:373771"/>
<dbReference type="AGR" id="Xenbase:XB-GENE-866501"/>
<dbReference type="CTD" id="373771"/>
<dbReference type="Xenbase" id="XB-GENE-866501">
    <property type="gene designation" value="pou2f3.L"/>
</dbReference>
<dbReference type="OMA" id="HTEIKMS"/>
<dbReference type="OrthoDB" id="6358449at2759"/>
<dbReference type="Proteomes" id="UP000186698">
    <property type="component" value="Chromosome 7L"/>
</dbReference>
<dbReference type="Proteomes" id="UP000694892">
    <property type="component" value="Chromosome 7L"/>
</dbReference>
<dbReference type="Bgee" id="373771">
    <property type="expression patterns" value="Expressed in zone of skin and 12 other cell types or tissues"/>
</dbReference>
<dbReference type="GO" id="GO:0005634">
    <property type="term" value="C:nucleus"/>
    <property type="evidence" value="ECO:0007669"/>
    <property type="project" value="UniProtKB-SubCell"/>
</dbReference>
<dbReference type="GO" id="GO:0000981">
    <property type="term" value="F:DNA-binding transcription factor activity, RNA polymerase II-specific"/>
    <property type="evidence" value="ECO:0000318"/>
    <property type="project" value="GO_Central"/>
</dbReference>
<dbReference type="GO" id="GO:0000978">
    <property type="term" value="F:RNA polymerase II cis-regulatory region sequence-specific DNA binding"/>
    <property type="evidence" value="ECO:0000318"/>
    <property type="project" value="GO_Central"/>
</dbReference>
<dbReference type="GO" id="GO:0006357">
    <property type="term" value="P:regulation of transcription by RNA polymerase II"/>
    <property type="evidence" value="ECO:0000318"/>
    <property type="project" value="GO_Central"/>
</dbReference>
<dbReference type="CDD" id="cd00086">
    <property type="entry name" value="homeodomain"/>
    <property type="match status" value="1"/>
</dbReference>
<dbReference type="FunFam" id="1.10.10.60:FF:000005">
    <property type="entry name" value="POU domain protein"/>
    <property type="match status" value="1"/>
</dbReference>
<dbReference type="FunFam" id="1.10.260.40:FF:000001">
    <property type="entry name" value="POU domain protein"/>
    <property type="match status" value="1"/>
</dbReference>
<dbReference type="Gene3D" id="1.10.10.60">
    <property type="entry name" value="Homeodomain-like"/>
    <property type="match status" value="1"/>
</dbReference>
<dbReference type="Gene3D" id="1.10.260.40">
    <property type="entry name" value="lambda repressor-like DNA-binding domains"/>
    <property type="match status" value="1"/>
</dbReference>
<dbReference type="InterPro" id="IPR001356">
    <property type="entry name" value="HD"/>
</dbReference>
<dbReference type="InterPro" id="IPR017970">
    <property type="entry name" value="Homeobox_CS"/>
</dbReference>
<dbReference type="InterPro" id="IPR009057">
    <property type="entry name" value="Homeodomain-like_sf"/>
</dbReference>
<dbReference type="InterPro" id="IPR010982">
    <property type="entry name" value="Lambda_DNA-bd_dom_sf"/>
</dbReference>
<dbReference type="InterPro" id="IPR013847">
    <property type="entry name" value="POU"/>
</dbReference>
<dbReference type="InterPro" id="IPR000327">
    <property type="entry name" value="POU_dom"/>
</dbReference>
<dbReference type="InterPro" id="IPR050255">
    <property type="entry name" value="POU_domain_TF"/>
</dbReference>
<dbReference type="InterPro" id="IPR000972">
    <property type="entry name" value="TF_octamer"/>
</dbReference>
<dbReference type="PANTHER" id="PTHR11636">
    <property type="entry name" value="POU DOMAIN"/>
    <property type="match status" value="1"/>
</dbReference>
<dbReference type="PANTHER" id="PTHR11636:SF81">
    <property type="entry name" value="POU DOMAIN, CLASS 2, TRANSCRIPTION FACTOR 3"/>
    <property type="match status" value="1"/>
</dbReference>
<dbReference type="Pfam" id="PF00046">
    <property type="entry name" value="Homeodomain"/>
    <property type="match status" value="1"/>
</dbReference>
<dbReference type="Pfam" id="PF00157">
    <property type="entry name" value="Pou"/>
    <property type="match status" value="1"/>
</dbReference>
<dbReference type="PRINTS" id="PR00029">
    <property type="entry name" value="OCTAMER"/>
</dbReference>
<dbReference type="PRINTS" id="PR00028">
    <property type="entry name" value="POUDOMAIN"/>
</dbReference>
<dbReference type="SMART" id="SM00389">
    <property type="entry name" value="HOX"/>
    <property type="match status" value="1"/>
</dbReference>
<dbReference type="SMART" id="SM00352">
    <property type="entry name" value="POU"/>
    <property type="match status" value="1"/>
</dbReference>
<dbReference type="SUPFAM" id="SSF46689">
    <property type="entry name" value="Homeodomain-like"/>
    <property type="match status" value="1"/>
</dbReference>
<dbReference type="SUPFAM" id="SSF47413">
    <property type="entry name" value="lambda repressor-like DNA-binding domains"/>
    <property type="match status" value="1"/>
</dbReference>
<dbReference type="PROSITE" id="PS00027">
    <property type="entry name" value="HOMEOBOX_1"/>
    <property type="match status" value="1"/>
</dbReference>
<dbReference type="PROSITE" id="PS50071">
    <property type="entry name" value="HOMEOBOX_2"/>
    <property type="match status" value="1"/>
</dbReference>
<dbReference type="PROSITE" id="PS00035">
    <property type="entry name" value="POU_1"/>
    <property type="match status" value="1"/>
</dbReference>
<dbReference type="PROSITE" id="PS00465">
    <property type="entry name" value="POU_2"/>
    <property type="match status" value="1"/>
</dbReference>
<dbReference type="PROSITE" id="PS51179">
    <property type="entry name" value="POU_3"/>
    <property type="match status" value="1"/>
</dbReference>
<comment type="function">
    <text evidence="2">Transcription factor that binds to the octamer motif (5'-ATTTGCAT-3') and regulates cell type-specific differentiation pathways.</text>
</comment>
<comment type="subcellular location">
    <subcellularLocation>
        <location evidence="1">Nucleus</location>
    </subcellularLocation>
</comment>
<comment type="similarity">
    <text evidence="6">Belongs to the POU transcription factor family. Class-2 subfamily.</text>
</comment>
<sequence length="404" mass="44741">MNREPDSTVEQQHGSGHLENDAERDTLDFSRQIKTEDFSEALQTGIPHRPCHLSQASMMGGGQMTGEMTSLHPLQQLVLVPSHLQSASQYLLSQSQSGQQGLYQPNHLSLPQQQGGILQPQTGLGLASQAVGRPGLPGSSLESHLEMGHLHAPKHLSVVSDEPSDLEELEKFAKTFKQRRIKLGFTQGDVGLAMGKLYGNDFSQTTISRFEALNLSFKNMCKLKPLLEKWLNDAESAPSDTALTPSANYAQLSEMFGRKRKKRTSIETNIRLTLEKRFQDNPKPSSEEISMIAEQLVMEKEVVRVWFCNRRQKEKRINCPMNLPLKSPVYNSRMVPTSGSLGSMSMTVTSSCSPGNSSRPSSPTCGLQPCSPGSSLISSKPTVNTSGYSNSSSWYRWNHSQYFH</sequence>